<proteinExistence type="inferred from homology"/>
<dbReference type="EC" id="5.1.3.1" evidence="1"/>
<dbReference type="EMBL" id="U23145">
    <property type="protein sequence ID" value="AAB82049.1"/>
    <property type="molecule type" value="Genomic_DNA"/>
</dbReference>
<dbReference type="PIR" id="T10507">
    <property type="entry name" value="T10507"/>
</dbReference>
<dbReference type="RefSeq" id="WP_055208329.1">
    <property type="nucleotide sequence ID" value="NZ_CP061202.1"/>
</dbReference>
<dbReference type="SMR" id="P51012"/>
<dbReference type="OrthoDB" id="1645589at2"/>
<dbReference type="GO" id="GO:0004750">
    <property type="term" value="F:D-ribulose-phosphate 3-epimerase activity"/>
    <property type="evidence" value="ECO:0007669"/>
    <property type="project" value="UniProtKB-UniRule"/>
</dbReference>
<dbReference type="GO" id="GO:0046872">
    <property type="term" value="F:metal ion binding"/>
    <property type="evidence" value="ECO:0007669"/>
    <property type="project" value="UniProtKB-UniRule"/>
</dbReference>
<dbReference type="GO" id="GO:0019323">
    <property type="term" value="P:pentose catabolic process"/>
    <property type="evidence" value="ECO:0007669"/>
    <property type="project" value="UniProtKB-UniRule"/>
</dbReference>
<dbReference type="GO" id="GO:0006098">
    <property type="term" value="P:pentose-phosphate shunt"/>
    <property type="evidence" value="ECO:0007669"/>
    <property type="project" value="InterPro"/>
</dbReference>
<dbReference type="GO" id="GO:0019253">
    <property type="term" value="P:reductive pentose-phosphate cycle"/>
    <property type="evidence" value="ECO:0007669"/>
    <property type="project" value="UniProtKB-KW"/>
</dbReference>
<dbReference type="CDD" id="cd00429">
    <property type="entry name" value="RPE"/>
    <property type="match status" value="1"/>
</dbReference>
<dbReference type="FunFam" id="3.20.20.70:FF:000004">
    <property type="entry name" value="Ribulose-phosphate 3-epimerase"/>
    <property type="match status" value="1"/>
</dbReference>
<dbReference type="Gene3D" id="3.20.20.70">
    <property type="entry name" value="Aldolase class I"/>
    <property type="match status" value="1"/>
</dbReference>
<dbReference type="HAMAP" id="MF_02227">
    <property type="entry name" value="RPE"/>
    <property type="match status" value="1"/>
</dbReference>
<dbReference type="InterPro" id="IPR013785">
    <property type="entry name" value="Aldolase_TIM"/>
</dbReference>
<dbReference type="InterPro" id="IPR026019">
    <property type="entry name" value="Ribul_P_3_epim"/>
</dbReference>
<dbReference type="InterPro" id="IPR000056">
    <property type="entry name" value="Ribul_P_3_epim-like"/>
</dbReference>
<dbReference type="InterPro" id="IPR011060">
    <property type="entry name" value="RibuloseP-bd_barrel"/>
</dbReference>
<dbReference type="NCBIfam" id="NF004076">
    <property type="entry name" value="PRK05581.1-4"/>
    <property type="match status" value="1"/>
</dbReference>
<dbReference type="NCBIfam" id="TIGR01163">
    <property type="entry name" value="rpe"/>
    <property type="match status" value="1"/>
</dbReference>
<dbReference type="PANTHER" id="PTHR11749">
    <property type="entry name" value="RIBULOSE-5-PHOSPHATE-3-EPIMERASE"/>
    <property type="match status" value="1"/>
</dbReference>
<dbReference type="Pfam" id="PF00834">
    <property type="entry name" value="Ribul_P_3_epim"/>
    <property type="match status" value="1"/>
</dbReference>
<dbReference type="PIRSF" id="PIRSF001461">
    <property type="entry name" value="RPE"/>
    <property type="match status" value="1"/>
</dbReference>
<dbReference type="SUPFAM" id="SSF51366">
    <property type="entry name" value="Ribulose-phoshate binding barrel"/>
    <property type="match status" value="1"/>
</dbReference>
<dbReference type="PROSITE" id="PS01085">
    <property type="entry name" value="RIBUL_P_3_EPIMER_1"/>
    <property type="match status" value="1"/>
</dbReference>
<dbReference type="PROSITE" id="PS01086">
    <property type="entry name" value="RIBUL_P_3_EPIMER_2"/>
    <property type="match status" value="1"/>
</dbReference>
<feature type="chain" id="PRO_0000171558" description="Ribulose-phosphate 3-epimerase">
    <location>
        <begin position="1"/>
        <end position="228"/>
    </location>
</feature>
<feature type="active site" description="Proton acceptor" evidence="1">
    <location>
        <position position="39"/>
    </location>
</feature>
<feature type="active site" description="Proton donor" evidence="1">
    <location>
        <position position="176"/>
    </location>
</feature>
<feature type="binding site" evidence="1">
    <location>
        <position position="12"/>
    </location>
    <ligand>
        <name>substrate</name>
    </ligand>
</feature>
<feature type="binding site" evidence="1">
    <location>
        <position position="37"/>
    </location>
    <ligand>
        <name>a divalent metal cation</name>
        <dbReference type="ChEBI" id="CHEBI:60240"/>
    </ligand>
</feature>
<feature type="binding site" evidence="1">
    <location>
        <position position="39"/>
    </location>
    <ligand>
        <name>a divalent metal cation</name>
        <dbReference type="ChEBI" id="CHEBI:60240"/>
    </ligand>
</feature>
<feature type="binding site" evidence="1">
    <location>
        <position position="70"/>
    </location>
    <ligand>
        <name>a divalent metal cation</name>
        <dbReference type="ChEBI" id="CHEBI:60240"/>
    </ligand>
</feature>
<feature type="binding site" evidence="1">
    <location>
        <position position="70"/>
    </location>
    <ligand>
        <name>substrate</name>
    </ligand>
</feature>
<feature type="binding site" evidence="1">
    <location>
        <begin position="146"/>
        <end position="149"/>
    </location>
    <ligand>
        <name>substrate</name>
    </ligand>
</feature>
<feature type="binding site" evidence="1">
    <location>
        <begin position="176"/>
        <end position="178"/>
    </location>
    <ligand>
        <name>substrate</name>
    </ligand>
</feature>
<feature type="binding site" evidence="1">
    <location>
        <position position="176"/>
    </location>
    <ligand>
        <name>a divalent metal cation</name>
        <dbReference type="ChEBI" id="CHEBI:60240"/>
    </ligand>
</feature>
<feature type="binding site" evidence="1">
    <location>
        <begin position="198"/>
        <end position="199"/>
    </location>
    <ligand>
        <name>substrate</name>
    </ligand>
</feature>
<comment type="function">
    <text evidence="1">Catalyzes the reversible epimerization of D-ribulose 5-phosphate to D-xylulose 5-phosphate.</text>
</comment>
<comment type="catalytic activity">
    <reaction evidence="1">
        <text>D-ribulose 5-phosphate = D-xylulose 5-phosphate</text>
        <dbReference type="Rhea" id="RHEA:13677"/>
        <dbReference type="ChEBI" id="CHEBI:57737"/>
        <dbReference type="ChEBI" id="CHEBI:58121"/>
        <dbReference type="EC" id="5.1.3.1"/>
    </reaction>
</comment>
<comment type="cofactor">
    <cofactor evidence="1">
        <name>a divalent metal cation</name>
        <dbReference type="ChEBI" id="CHEBI:60240"/>
    </cofactor>
    <text evidence="1">Binds 1 divalent metal cation per subunit.</text>
</comment>
<comment type="pathway">
    <text evidence="1">Carbohydrate degradation.</text>
</comment>
<comment type="similarity">
    <text evidence="1">Belongs to the ribulose-phosphate 3-epimerase family.</text>
</comment>
<gene>
    <name evidence="1" type="primary">rpe</name>
    <name type="synonym">cbbE</name>
</gene>
<keyword id="KW-0113">Calvin cycle</keyword>
<keyword id="KW-0119">Carbohydrate metabolism</keyword>
<keyword id="KW-0413">Isomerase</keyword>
<keyword id="KW-0479">Metal-binding</keyword>
<accession>P51012</accession>
<name>RPE_RHOCA</name>
<organism>
    <name type="scientific">Rhodobacter capsulatus</name>
    <name type="common">Rhodopseudomonas capsulata</name>
    <dbReference type="NCBI Taxonomy" id="1061"/>
    <lineage>
        <taxon>Bacteria</taxon>
        <taxon>Pseudomonadati</taxon>
        <taxon>Pseudomonadota</taxon>
        <taxon>Alphaproteobacteria</taxon>
        <taxon>Rhodobacterales</taxon>
        <taxon>Rhodobacter group</taxon>
        <taxon>Rhodobacter</taxon>
    </lineage>
</organism>
<reference key="1">
    <citation type="submission" date="1997-10" db="EMBL/GenBank/DDBJ databases">
        <authorList>
            <person name="Larimer F.W."/>
            <person name="Lu T.-Y.S."/>
            <person name="Buley D.M."/>
        </authorList>
    </citation>
    <scope>NUCLEOTIDE SEQUENCE [GENOMIC DNA]</scope>
    <source>
        <strain>ATCC 11166 / DSM 1710 / CCUG 31484 / JCM 21090 / LMG 2962 / NBRC 16435 / NCIMB 8254 / ATH 2.3.1</strain>
    </source>
</reference>
<sequence length="228" mass="23879">MTFDRSIKIAPSILSADFADFGREIQAIEAQGADWVHVDVMDGHFVPNLTFGPPAVAAFRKHVKTVMDVHLMISPVDAYIDAYAQAGADVLTAHVEAGPHIHRTLQAIRAAGMKSGVAINPGTPAEAIEHVLDIADVVCVMTVNPGFGGQKYIDMTAKVRKLRAMIGDRPVHIEIDGGMDPVTAPLMAAAGADVFVAGSGVFKGGSVSTPEVYGKNIAAIRAAAQAAL</sequence>
<evidence type="ECO:0000255" key="1">
    <source>
        <dbReference type="HAMAP-Rule" id="MF_02227"/>
    </source>
</evidence>
<protein>
    <recommendedName>
        <fullName evidence="1">Ribulose-phosphate 3-epimerase</fullName>
        <ecNumber evidence="1">5.1.3.1</ecNumber>
    </recommendedName>
</protein>